<comment type="function">
    <text evidence="1">One of the primary rRNA binding proteins, it binds directly to 16S rRNA where it helps nucleate assembly of the platform of the 30S subunit by binding and bridging several RNA helices of the 16S rRNA.</text>
</comment>
<comment type="function">
    <text evidence="1">Forms an intersubunit bridge (bridge B4) with the 23S rRNA of the 50S subunit in the ribosome.</text>
</comment>
<comment type="subunit">
    <text evidence="1">Part of the 30S ribosomal subunit. Forms a bridge to the 50S subunit in the 70S ribosome, contacting the 23S rRNA.</text>
</comment>
<comment type="similarity">
    <text evidence="1">Belongs to the universal ribosomal protein uS15 family.</text>
</comment>
<accession>P75173</accession>
<name>RS15_MYCPN</name>
<evidence type="ECO:0000255" key="1">
    <source>
        <dbReference type="HAMAP-Rule" id="MF_01343"/>
    </source>
</evidence>
<evidence type="ECO:0000305" key="2"/>
<evidence type="ECO:0007829" key="3">
    <source>
        <dbReference type="PDB" id="8P6P"/>
    </source>
</evidence>
<dbReference type="EMBL" id="U00089">
    <property type="protein sequence ID" value="AAB95868.1"/>
    <property type="molecule type" value="Genomic_DNA"/>
</dbReference>
<dbReference type="PIR" id="S73546">
    <property type="entry name" value="S73546"/>
</dbReference>
<dbReference type="RefSeq" id="NP_110311.1">
    <property type="nucleotide sequence ID" value="NC_000912.1"/>
</dbReference>
<dbReference type="RefSeq" id="WP_010874979.1">
    <property type="nucleotide sequence ID" value="NZ_OU342337.1"/>
</dbReference>
<dbReference type="PDB" id="7OOC">
    <property type="method" value="EM"/>
    <property type="resolution" value="3.70 A"/>
    <property type="chains" value="N=1-86"/>
</dbReference>
<dbReference type="PDB" id="7P6Z">
    <property type="method" value="EM"/>
    <property type="resolution" value="3.50 A"/>
    <property type="chains" value="N=1-86"/>
</dbReference>
<dbReference type="PDB" id="7PAH">
    <property type="method" value="EM"/>
    <property type="resolution" value="9.50 A"/>
    <property type="chains" value="N=1-86"/>
</dbReference>
<dbReference type="PDB" id="7PAI">
    <property type="method" value="EM"/>
    <property type="resolution" value="6.70 A"/>
    <property type="chains" value="N=1-86"/>
</dbReference>
<dbReference type="PDB" id="7PAJ">
    <property type="method" value="EM"/>
    <property type="resolution" value="7.30 A"/>
    <property type="chains" value="N=1-86"/>
</dbReference>
<dbReference type="PDB" id="7PAK">
    <property type="method" value="EM"/>
    <property type="resolution" value="5.30 A"/>
    <property type="chains" value="N=1-86"/>
</dbReference>
<dbReference type="PDB" id="7PAL">
    <property type="method" value="EM"/>
    <property type="resolution" value="4.70 A"/>
    <property type="chains" value="N=1-86"/>
</dbReference>
<dbReference type="PDB" id="7PAM">
    <property type="method" value="EM"/>
    <property type="resolution" value="6.80 A"/>
    <property type="chains" value="N=1-86"/>
</dbReference>
<dbReference type="PDB" id="7PAN">
    <property type="method" value="EM"/>
    <property type="resolution" value="9.70 A"/>
    <property type="chains" value="N=1-86"/>
</dbReference>
<dbReference type="PDB" id="7PAO">
    <property type="method" value="EM"/>
    <property type="resolution" value="7.00 A"/>
    <property type="chains" value="N=1-86"/>
</dbReference>
<dbReference type="PDB" id="7PAQ">
    <property type="method" value="EM"/>
    <property type="resolution" value="8.90 A"/>
    <property type="chains" value="N=1-86"/>
</dbReference>
<dbReference type="PDB" id="7PAR">
    <property type="method" value="EM"/>
    <property type="resolution" value="8.20 A"/>
    <property type="chains" value="N=1-86"/>
</dbReference>
<dbReference type="PDB" id="7PAS">
    <property type="method" value="EM"/>
    <property type="resolution" value="16.00 A"/>
    <property type="chains" value="N=1-86"/>
</dbReference>
<dbReference type="PDB" id="7PH9">
    <property type="method" value="EM"/>
    <property type="resolution" value="8.70 A"/>
    <property type="chains" value="N=1-86"/>
</dbReference>
<dbReference type="PDB" id="7PHA">
    <property type="method" value="EM"/>
    <property type="resolution" value="8.50 A"/>
    <property type="chains" value="N=1-86"/>
</dbReference>
<dbReference type="PDB" id="7PHB">
    <property type="method" value="EM"/>
    <property type="resolution" value="4.90 A"/>
    <property type="chains" value="N=1-86"/>
</dbReference>
<dbReference type="PDB" id="7PHC">
    <property type="method" value="EM"/>
    <property type="resolution" value="9.90 A"/>
    <property type="chains" value="N=1-86"/>
</dbReference>
<dbReference type="PDB" id="7PI8">
    <property type="method" value="EM"/>
    <property type="resolution" value="8.90 A"/>
    <property type="chains" value="N=1-86"/>
</dbReference>
<dbReference type="PDB" id="7PI9">
    <property type="method" value="EM"/>
    <property type="resolution" value="6.30 A"/>
    <property type="chains" value="N=1-86"/>
</dbReference>
<dbReference type="PDB" id="7PIA">
    <property type="method" value="EM"/>
    <property type="resolution" value="13.60 A"/>
    <property type="chains" value="N=1-86"/>
</dbReference>
<dbReference type="PDB" id="7PIB">
    <property type="method" value="EM"/>
    <property type="resolution" value="4.70 A"/>
    <property type="chains" value="N=1-86"/>
</dbReference>
<dbReference type="PDB" id="7PIC">
    <property type="method" value="EM"/>
    <property type="resolution" value="9.10 A"/>
    <property type="chains" value="N=1-86"/>
</dbReference>
<dbReference type="PDB" id="7PIO">
    <property type="method" value="EM"/>
    <property type="resolution" value="9.50 A"/>
    <property type="chains" value="N=1-86"/>
</dbReference>
<dbReference type="PDB" id="7PIP">
    <property type="method" value="EM"/>
    <property type="resolution" value="9.30 A"/>
    <property type="chains" value="N=1-86"/>
</dbReference>
<dbReference type="PDB" id="7PIQ">
    <property type="method" value="EM"/>
    <property type="resolution" value="9.70 A"/>
    <property type="chains" value="N=1-86"/>
</dbReference>
<dbReference type="PDB" id="7PIR">
    <property type="method" value="EM"/>
    <property type="resolution" value="12.10 A"/>
    <property type="chains" value="N=1-86"/>
</dbReference>
<dbReference type="PDB" id="7PIS">
    <property type="method" value="EM"/>
    <property type="resolution" value="15.00 A"/>
    <property type="chains" value="N=1-86"/>
</dbReference>
<dbReference type="PDB" id="7PIT">
    <property type="method" value="EM"/>
    <property type="resolution" value="5.70 A"/>
    <property type="chains" value="N=1-86"/>
</dbReference>
<dbReference type="PDB" id="8P6P">
    <property type="method" value="EM"/>
    <property type="resolution" value="3.20 A"/>
    <property type="chains" value="N=1-86"/>
</dbReference>
<dbReference type="PDB" id="8P7X">
    <property type="method" value="EM"/>
    <property type="resolution" value="3.03 A"/>
    <property type="chains" value="N=1-86"/>
</dbReference>
<dbReference type="PDB" id="8P7Y">
    <property type="method" value="EM"/>
    <property type="resolution" value="3.70 A"/>
    <property type="chains" value="N=1-86"/>
</dbReference>
<dbReference type="PDB" id="8P8V">
    <property type="method" value="EM"/>
    <property type="resolution" value="8.70 A"/>
    <property type="chains" value="N=1-86"/>
</dbReference>
<dbReference type="PDB" id="8P8W">
    <property type="method" value="EM"/>
    <property type="resolution" value="8.70 A"/>
    <property type="chains" value="N=1-86"/>
</dbReference>
<dbReference type="PDBsum" id="7OOC"/>
<dbReference type="PDBsum" id="7P6Z"/>
<dbReference type="PDBsum" id="7PAH"/>
<dbReference type="PDBsum" id="7PAI"/>
<dbReference type="PDBsum" id="7PAJ"/>
<dbReference type="PDBsum" id="7PAK"/>
<dbReference type="PDBsum" id="7PAL"/>
<dbReference type="PDBsum" id="7PAM"/>
<dbReference type="PDBsum" id="7PAN"/>
<dbReference type="PDBsum" id="7PAO"/>
<dbReference type="PDBsum" id="7PAQ"/>
<dbReference type="PDBsum" id="7PAR"/>
<dbReference type="PDBsum" id="7PAS"/>
<dbReference type="PDBsum" id="7PH9"/>
<dbReference type="PDBsum" id="7PHA"/>
<dbReference type="PDBsum" id="7PHB"/>
<dbReference type="PDBsum" id="7PHC"/>
<dbReference type="PDBsum" id="7PI8"/>
<dbReference type="PDBsum" id="7PI9"/>
<dbReference type="PDBsum" id="7PIA"/>
<dbReference type="PDBsum" id="7PIB"/>
<dbReference type="PDBsum" id="7PIC"/>
<dbReference type="PDBsum" id="7PIO"/>
<dbReference type="PDBsum" id="7PIP"/>
<dbReference type="PDBsum" id="7PIQ"/>
<dbReference type="PDBsum" id="7PIR"/>
<dbReference type="PDBsum" id="7PIS"/>
<dbReference type="PDBsum" id="7PIT"/>
<dbReference type="PDBsum" id="8P6P"/>
<dbReference type="PDBsum" id="8P7X"/>
<dbReference type="PDBsum" id="8P7Y"/>
<dbReference type="PDBsum" id="8P8V"/>
<dbReference type="PDBsum" id="8P8W"/>
<dbReference type="EMDB" id="EMD-13234"/>
<dbReference type="EMDB" id="EMD-13272"/>
<dbReference type="EMDB" id="EMD-13273"/>
<dbReference type="EMDB" id="EMD-13274"/>
<dbReference type="EMDB" id="EMD-13275"/>
<dbReference type="EMDB" id="EMD-13276"/>
<dbReference type="EMDB" id="EMD-13277"/>
<dbReference type="EMDB" id="EMD-13278"/>
<dbReference type="EMDB" id="EMD-13279"/>
<dbReference type="EMDB" id="EMD-13280"/>
<dbReference type="EMDB" id="EMD-13281"/>
<dbReference type="EMDB" id="EMD-13282"/>
<dbReference type="EMDB" id="EMD-13410"/>
<dbReference type="EMDB" id="EMD-13411"/>
<dbReference type="EMDB" id="EMD-13412"/>
<dbReference type="EMDB" id="EMD-13413"/>
<dbReference type="EMDB" id="EMD-13432"/>
<dbReference type="EMDB" id="EMD-13433"/>
<dbReference type="EMDB" id="EMD-13434"/>
<dbReference type="EMDB" id="EMD-13435"/>
<dbReference type="EMDB" id="EMD-13436"/>
<dbReference type="EMDB" id="EMD-13445"/>
<dbReference type="EMDB" id="EMD-13446"/>
<dbReference type="EMDB" id="EMD-13447"/>
<dbReference type="EMDB" id="EMD-13448"/>
<dbReference type="EMDB" id="EMD-13449"/>
<dbReference type="EMDB" id="EMD-13450"/>
<dbReference type="SMR" id="P75173"/>
<dbReference type="IntAct" id="P75173">
    <property type="interactions" value="1"/>
</dbReference>
<dbReference type="STRING" id="272634.MPN_622"/>
<dbReference type="EnsemblBacteria" id="AAB95868">
    <property type="protein sequence ID" value="AAB95868"/>
    <property type="gene ID" value="MPN_622"/>
</dbReference>
<dbReference type="GeneID" id="66608692"/>
<dbReference type="KEGG" id="mpn:MPN_622"/>
<dbReference type="PATRIC" id="fig|272634.6.peg.686"/>
<dbReference type="HOGENOM" id="CLU_148518_1_0_14"/>
<dbReference type="OrthoDB" id="9799262at2"/>
<dbReference type="BioCyc" id="MPNE272634:G1GJ3-1002-MONOMER"/>
<dbReference type="Proteomes" id="UP000000808">
    <property type="component" value="Chromosome"/>
</dbReference>
<dbReference type="GO" id="GO:0022627">
    <property type="term" value="C:cytosolic small ribosomal subunit"/>
    <property type="evidence" value="ECO:0007669"/>
    <property type="project" value="TreeGrafter"/>
</dbReference>
<dbReference type="GO" id="GO:0019843">
    <property type="term" value="F:rRNA binding"/>
    <property type="evidence" value="ECO:0007669"/>
    <property type="project" value="UniProtKB-UniRule"/>
</dbReference>
<dbReference type="GO" id="GO:0003735">
    <property type="term" value="F:structural constituent of ribosome"/>
    <property type="evidence" value="ECO:0007669"/>
    <property type="project" value="InterPro"/>
</dbReference>
<dbReference type="GO" id="GO:0006412">
    <property type="term" value="P:translation"/>
    <property type="evidence" value="ECO:0007669"/>
    <property type="project" value="UniProtKB-UniRule"/>
</dbReference>
<dbReference type="CDD" id="cd00353">
    <property type="entry name" value="Ribosomal_S15p_S13e"/>
    <property type="match status" value="1"/>
</dbReference>
<dbReference type="Gene3D" id="6.10.250.3130">
    <property type="match status" value="1"/>
</dbReference>
<dbReference type="Gene3D" id="1.10.287.10">
    <property type="entry name" value="S15/NS1, RNA-binding"/>
    <property type="match status" value="1"/>
</dbReference>
<dbReference type="HAMAP" id="MF_01343_B">
    <property type="entry name" value="Ribosomal_uS15_B"/>
    <property type="match status" value="1"/>
</dbReference>
<dbReference type="InterPro" id="IPR000589">
    <property type="entry name" value="Ribosomal_uS15"/>
</dbReference>
<dbReference type="InterPro" id="IPR005290">
    <property type="entry name" value="Ribosomal_uS15_bac-type"/>
</dbReference>
<dbReference type="InterPro" id="IPR009068">
    <property type="entry name" value="uS15_NS1_RNA-bd_sf"/>
</dbReference>
<dbReference type="NCBIfam" id="TIGR00952">
    <property type="entry name" value="S15_bact"/>
    <property type="match status" value="1"/>
</dbReference>
<dbReference type="PANTHER" id="PTHR23321">
    <property type="entry name" value="RIBOSOMAL PROTEIN S15, BACTERIAL AND ORGANELLAR"/>
    <property type="match status" value="1"/>
</dbReference>
<dbReference type="PANTHER" id="PTHR23321:SF26">
    <property type="entry name" value="SMALL RIBOSOMAL SUBUNIT PROTEIN US15M"/>
    <property type="match status" value="1"/>
</dbReference>
<dbReference type="Pfam" id="PF00312">
    <property type="entry name" value="Ribosomal_S15"/>
    <property type="match status" value="1"/>
</dbReference>
<dbReference type="SMART" id="SM01387">
    <property type="entry name" value="Ribosomal_S15"/>
    <property type="match status" value="1"/>
</dbReference>
<dbReference type="SUPFAM" id="SSF47060">
    <property type="entry name" value="S15/NS1 RNA-binding domain"/>
    <property type="match status" value="1"/>
</dbReference>
<dbReference type="PROSITE" id="PS00362">
    <property type="entry name" value="RIBOSOMAL_S15"/>
    <property type="match status" value="1"/>
</dbReference>
<gene>
    <name evidence="1" type="primary">rpsO</name>
    <name type="ordered locus">MPN_622</name>
    <name type="ORF">MP220</name>
</gene>
<proteinExistence type="evidence at protein level"/>
<protein>
    <recommendedName>
        <fullName evidence="1">Small ribosomal subunit protein uS15</fullName>
    </recommendedName>
    <alternativeName>
        <fullName evidence="2">30S ribosomal protein S15</fullName>
    </alternativeName>
</protein>
<feature type="chain" id="PRO_0000115484" description="Small ribosomal subunit protein uS15">
    <location>
        <begin position="1"/>
        <end position="86"/>
    </location>
</feature>
<feature type="helix" evidence="3">
    <location>
        <begin position="5"/>
        <end position="12"/>
    </location>
</feature>
<feature type="helix" evidence="3">
    <location>
        <begin position="22"/>
        <end position="43"/>
    </location>
</feature>
<feature type="helix" evidence="3">
    <location>
        <begin position="47"/>
        <end position="69"/>
    </location>
</feature>
<feature type="helix" evidence="3">
    <location>
        <begin position="72"/>
        <end position="82"/>
    </location>
</feature>
<organism>
    <name type="scientific">Mycoplasma pneumoniae (strain ATCC 29342 / M129 / Subtype 1)</name>
    <name type="common">Mycoplasmoides pneumoniae</name>
    <dbReference type="NCBI Taxonomy" id="272634"/>
    <lineage>
        <taxon>Bacteria</taxon>
        <taxon>Bacillati</taxon>
        <taxon>Mycoplasmatota</taxon>
        <taxon>Mycoplasmoidales</taxon>
        <taxon>Mycoplasmoidaceae</taxon>
        <taxon>Mycoplasmoides</taxon>
    </lineage>
</organism>
<reference key="1">
    <citation type="journal article" date="1996" name="Nucleic Acids Res.">
        <title>Complete sequence analysis of the genome of the bacterium Mycoplasma pneumoniae.</title>
        <authorList>
            <person name="Himmelreich R."/>
            <person name="Hilbert H."/>
            <person name="Plagens H."/>
            <person name="Pirkl E."/>
            <person name="Li B.-C."/>
            <person name="Herrmann R."/>
        </authorList>
    </citation>
    <scope>NUCLEOTIDE SEQUENCE [LARGE SCALE GENOMIC DNA]</scope>
    <source>
        <strain>ATCC 29342 / M129 / Subtype 1</strain>
    </source>
</reference>
<sequence>MQIDKNGIIKSAQLHDKDVGSIQVQVSLLTSQIKQLTDHLLANKKDFISKRGLYAKVSKRKRLLKYLKHNDLEAYRNLVKTLNLRG</sequence>
<keyword id="KW-0002">3D-structure</keyword>
<keyword id="KW-1185">Reference proteome</keyword>
<keyword id="KW-0687">Ribonucleoprotein</keyword>
<keyword id="KW-0689">Ribosomal protein</keyword>
<keyword id="KW-0694">RNA-binding</keyword>
<keyword id="KW-0699">rRNA-binding</keyword>